<proteinExistence type="uncertain"/>
<sequence>MFNRVLIQSTNLDVGWVQEDSNRSTEGLGWQIVSEGGSNDTRVTVSSGNLTPHNSNLRTPDFLGGSVDVGNTLTQVKLSILWSSDTFDLDQRDIWVVDSLGSLVG</sequence>
<accession>Q08916</accession>
<comment type="miscellaneous">
    <text evidence="1">Completely contained within RPL33A.</text>
</comment>
<comment type="caution">
    <text evidence="2">Product of a dubious gene prediction unlikely to encode a functional protein. Because of that it is not part of the S.cerevisiae S288c complete/reference proteome set.</text>
</comment>
<protein>
    <recommendedName>
        <fullName>Putative uncharacterized protein YPL142C</fullName>
    </recommendedName>
</protein>
<name>YP142_YEAST</name>
<feature type="chain" id="PRO_0000299754" description="Putative uncharacterized protein YPL142C">
    <location>
        <begin position="1"/>
        <end position="105"/>
    </location>
</feature>
<reference key="1">
    <citation type="journal article" date="1997" name="Nature">
        <title>The nucleotide sequence of Saccharomyces cerevisiae chromosome XVI.</title>
        <authorList>
            <person name="Bussey H."/>
            <person name="Storms R.K."/>
            <person name="Ahmed A."/>
            <person name="Albermann K."/>
            <person name="Allen E."/>
            <person name="Ansorge W."/>
            <person name="Araujo R."/>
            <person name="Aparicio A."/>
            <person name="Barrell B.G."/>
            <person name="Badcock K."/>
            <person name="Benes V."/>
            <person name="Botstein D."/>
            <person name="Bowman S."/>
            <person name="Brueckner M."/>
            <person name="Carpenter J."/>
            <person name="Cherry J.M."/>
            <person name="Chung E."/>
            <person name="Churcher C.M."/>
            <person name="Coster F."/>
            <person name="Davis K."/>
            <person name="Davis R.W."/>
            <person name="Dietrich F.S."/>
            <person name="Delius H."/>
            <person name="DiPaolo T."/>
            <person name="Dubois E."/>
            <person name="Duesterhoeft A."/>
            <person name="Duncan M."/>
            <person name="Floeth M."/>
            <person name="Fortin N."/>
            <person name="Friesen J.D."/>
            <person name="Fritz C."/>
            <person name="Goffeau A."/>
            <person name="Hall J."/>
            <person name="Hebling U."/>
            <person name="Heumann K."/>
            <person name="Hilbert H."/>
            <person name="Hillier L.W."/>
            <person name="Hunicke-Smith S."/>
            <person name="Hyman R.W."/>
            <person name="Johnston M."/>
            <person name="Kalman S."/>
            <person name="Kleine K."/>
            <person name="Komp C."/>
            <person name="Kurdi O."/>
            <person name="Lashkari D."/>
            <person name="Lew H."/>
            <person name="Lin A."/>
            <person name="Lin D."/>
            <person name="Louis E.J."/>
            <person name="Marathe R."/>
            <person name="Messenguy F."/>
            <person name="Mewes H.-W."/>
            <person name="Mirtipati S."/>
            <person name="Moestl D."/>
            <person name="Mueller-Auer S."/>
            <person name="Namath A."/>
            <person name="Nentwich U."/>
            <person name="Oefner P."/>
            <person name="Pearson D."/>
            <person name="Petel F.X."/>
            <person name="Pohl T.M."/>
            <person name="Purnelle B."/>
            <person name="Rajandream M.A."/>
            <person name="Rechmann S."/>
            <person name="Rieger M."/>
            <person name="Riles L."/>
            <person name="Roberts D."/>
            <person name="Schaefer M."/>
            <person name="Scharfe M."/>
            <person name="Scherens B."/>
            <person name="Schramm S."/>
            <person name="Schroeder M."/>
            <person name="Sdicu A.-M."/>
            <person name="Tettelin H."/>
            <person name="Urrestarazu L.A."/>
            <person name="Ushinsky S."/>
            <person name="Vierendeels F."/>
            <person name="Vissers S."/>
            <person name="Voss H."/>
            <person name="Walsh S.V."/>
            <person name="Wambutt R."/>
            <person name="Wang Y."/>
            <person name="Wedler E."/>
            <person name="Wedler H."/>
            <person name="Winnett E."/>
            <person name="Zhong W.-W."/>
            <person name="Zollner A."/>
            <person name="Vo D.H."/>
            <person name="Hani J."/>
        </authorList>
    </citation>
    <scope>NUCLEOTIDE SEQUENCE [LARGE SCALE GENOMIC DNA]</scope>
    <source>
        <strain>ATCC 204508 / S288c</strain>
    </source>
</reference>
<reference key="2">
    <citation type="journal article" date="2014" name="G3 (Bethesda)">
        <title>The reference genome sequence of Saccharomyces cerevisiae: Then and now.</title>
        <authorList>
            <person name="Engel S.R."/>
            <person name="Dietrich F.S."/>
            <person name="Fisk D.G."/>
            <person name="Binkley G."/>
            <person name="Balakrishnan R."/>
            <person name="Costanzo M.C."/>
            <person name="Dwight S.S."/>
            <person name="Hitz B.C."/>
            <person name="Karra K."/>
            <person name="Nash R.S."/>
            <person name="Weng S."/>
            <person name="Wong E.D."/>
            <person name="Lloyd P."/>
            <person name="Skrzypek M.S."/>
            <person name="Miyasato S.R."/>
            <person name="Simison M."/>
            <person name="Cherry J.M."/>
        </authorList>
    </citation>
    <scope>GENOME REANNOTATION</scope>
    <source>
        <strain>ATCC 204508 / S288c</strain>
    </source>
</reference>
<gene>
    <name type="ordered locus">YPL142C</name>
</gene>
<organism>
    <name type="scientific">Saccharomyces cerevisiae (strain ATCC 204508 / S288c)</name>
    <name type="common">Baker's yeast</name>
    <dbReference type="NCBI Taxonomy" id="559292"/>
    <lineage>
        <taxon>Eukaryota</taxon>
        <taxon>Fungi</taxon>
        <taxon>Dikarya</taxon>
        <taxon>Ascomycota</taxon>
        <taxon>Saccharomycotina</taxon>
        <taxon>Saccharomycetes</taxon>
        <taxon>Saccharomycetales</taxon>
        <taxon>Saccharomycetaceae</taxon>
        <taxon>Saccharomyces</taxon>
    </lineage>
</organism>
<dbReference type="EMBL" id="U43703">
    <property type="protein sequence ID" value="AAB68233.1"/>
    <property type="molecule type" value="Genomic_DNA"/>
</dbReference>
<dbReference type="EMBL" id="Z73499">
    <property type="protein sequence ID" value="CAA97846.1"/>
    <property type="molecule type" value="Genomic_DNA"/>
</dbReference>
<dbReference type="PIR" id="S70042">
    <property type="entry name" value="S70042"/>
</dbReference>
<dbReference type="IntAct" id="Q08916">
    <property type="interactions" value="1"/>
</dbReference>
<dbReference type="STRING" id="4932.YPL142C"/>
<dbReference type="PaxDb" id="4932-YPL142C"/>
<dbReference type="EnsemblFungi" id="YPL142C_mRNA">
    <property type="protein sequence ID" value="YPL142C"/>
    <property type="gene ID" value="YPL142C"/>
</dbReference>
<dbReference type="AGR" id="SGD:S000006063"/>
<dbReference type="SGD" id="S000006063">
    <property type="gene designation" value="YPL142C"/>
</dbReference>
<dbReference type="HOGENOM" id="CLU_2238724_0_0_1"/>
<dbReference type="OMA" id="WQVRSEC"/>
<evidence type="ECO:0000305" key="1"/>
<evidence type="ECO:0000305" key="2">
    <source>
    </source>
</evidence>